<organism>
    <name type="scientific">Haemophilus influenzae (strain ATCC 51907 / DSM 11121 / KW20 / Rd)</name>
    <dbReference type="NCBI Taxonomy" id="71421"/>
    <lineage>
        <taxon>Bacteria</taxon>
        <taxon>Pseudomonadati</taxon>
        <taxon>Pseudomonadota</taxon>
        <taxon>Gammaproteobacteria</taxon>
        <taxon>Pasteurellales</taxon>
        <taxon>Pasteurellaceae</taxon>
        <taxon>Haemophilus</taxon>
    </lineage>
</organism>
<accession>P44102</accession>
<feature type="chain" id="PRO_0000211656" description="Probable Tat proofreading chaperone DmsD">
    <location>
        <begin position="1"/>
        <end position="203"/>
    </location>
</feature>
<evidence type="ECO:0000255" key="1">
    <source>
        <dbReference type="HAMAP-Rule" id="MF_00940"/>
    </source>
</evidence>
<keyword id="KW-0143">Chaperone</keyword>
<keyword id="KW-1185">Reference proteome</keyword>
<comment type="function">
    <text evidence="1">Required for biogenesis/assembly of DMSO reductase, but not for the interaction of the DmsA signal peptide with the Tat system. May be part of a chaperone cascade complex that facilitates a folding-maturation pathway for the substrate protein.</text>
</comment>
<comment type="similarity">
    <text evidence="1">Belongs to the TorD/DmsD family. DmsD subfamily.</text>
</comment>
<name>DMSD_HAEIN</name>
<protein>
    <recommendedName>
        <fullName evidence="1">Probable Tat proofreading chaperone DmsD</fullName>
    </recommendedName>
    <alternativeName>
        <fullName evidence="1">DMSO reductase maturation protein</fullName>
    </alternativeName>
    <alternativeName>
        <fullName evidence="1">Twin-arginine leader-binding protein DmsD</fullName>
    </alternativeName>
</protein>
<reference key="1">
    <citation type="journal article" date="1995" name="Science">
        <title>Whole-genome random sequencing and assembly of Haemophilus influenzae Rd.</title>
        <authorList>
            <person name="Fleischmann R.D."/>
            <person name="Adams M.D."/>
            <person name="White O."/>
            <person name="Clayton R.A."/>
            <person name="Kirkness E.F."/>
            <person name="Kerlavage A.R."/>
            <person name="Bult C.J."/>
            <person name="Tomb J.-F."/>
            <person name="Dougherty B.A."/>
            <person name="Merrick J.M."/>
            <person name="McKenney K."/>
            <person name="Sutton G.G."/>
            <person name="FitzHugh W."/>
            <person name="Fields C.A."/>
            <person name="Gocayne J.D."/>
            <person name="Scott J.D."/>
            <person name="Shirley R."/>
            <person name="Liu L.-I."/>
            <person name="Glodek A."/>
            <person name="Kelley J.M."/>
            <person name="Weidman J.F."/>
            <person name="Phillips C.A."/>
            <person name="Spriggs T."/>
            <person name="Hedblom E."/>
            <person name="Cotton M.D."/>
            <person name="Utterback T.R."/>
            <person name="Hanna M.C."/>
            <person name="Nguyen D.T."/>
            <person name="Saudek D.M."/>
            <person name="Brandon R.C."/>
            <person name="Fine L.D."/>
            <person name="Fritchman J.L."/>
            <person name="Fuhrmann J.L."/>
            <person name="Geoghagen N.S.M."/>
            <person name="Gnehm C.L."/>
            <person name="McDonald L.A."/>
            <person name="Small K.V."/>
            <person name="Fraser C.M."/>
            <person name="Smith H.O."/>
            <person name="Venter J.C."/>
        </authorList>
    </citation>
    <scope>NUCLEOTIDE SEQUENCE [LARGE SCALE GENOMIC DNA]</scope>
    <source>
        <strain>ATCC 51907 / DSM 11121 / KW20 / Rd</strain>
    </source>
</reference>
<proteinExistence type="inferred from homology"/>
<dbReference type="EMBL" id="L42023">
    <property type="protein sequence ID" value="AAC22703.1"/>
    <property type="molecule type" value="Genomic_DNA"/>
</dbReference>
<dbReference type="PIR" id="C64019">
    <property type="entry name" value="C64019"/>
</dbReference>
<dbReference type="RefSeq" id="NP_439203.1">
    <property type="nucleotide sequence ID" value="NC_000907.1"/>
</dbReference>
<dbReference type="SMR" id="P44102"/>
<dbReference type="STRING" id="71421.HI_1044"/>
<dbReference type="EnsemblBacteria" id="AAC22703">
    <property type="protein sequence ID" value="AAC22703"/>
    <property type="gene ID" value="HI_1044"/>
</dbReference>
<dbReference type="KEGG" id="hin:HI_1044"/>
<dbReference type="PATRIC" id="fig|71421.8.peg.1089"/>
<dbReference type="eggNOG" id="COG3381">
    <property type="taxonomic scope" value="Bacteria"/>
</dbReference>
<dbReference type="HOGENOM" id="CLU_077650_7_1_6"/>
<dbReference type="OrthoDB" id="3174863at2"/>
<dbReference type="PhylomeDB" id="P44102"/>
<dbReference type="BioCyc" id="HINF71421:G1GJ1-1083-MONOMER"/>
<dbReference type="Proteomes" id="UP000000579">
    <property type="component" value="Chromosome"/>
</dbReference>
<dbReference type="GO" id="GO:0005737">
    <property type="term" value="C:cytoplasm"/>
    <property type="evidence" value="ECO:0000318"/>
    <property type="project" value="GO_Central"/>
</dbReference>
<dbReference type="GO" id="GO:0005048">
    <property type="term" value="F:signal sequence binding"/>
    <property type="evidence" value="ECO:0007669"/>
    <property type="project" value="InterPro"/>
</dbReference>
<dbReference type="GO" id="GO:0061077">
    <property type="term" value="P:chaperone-mediated protein folding"/>
    <property type="evidence" value="ECO:0007669"/>
    <property type="project" value="UniProtKB-UniRule"/>
</dbReference>
<dbReference type="GO" id="GO:0051604">
    <property type="term" value="P:protein maturation"/>
    <property type="evidence" value="ECO:0000318"/>
    <property type="project" value="GO_Central"/>
</dbReference>
<dbReference type="Gene3D" id="1.10.3480.10">
    <property type="entry name" value="TorD-like"/>
    <property type="match status" value="1"/>
</dbReference>
<dbReference type="HAMAP" id="MF_00940">
    <property type="entry name" value="DmsD_chaperone"/>
    <property type="match status" value="1"/>
</dbReference>
<dbReference type="InterPro" id="IPR026269">
    <property type="entry name" value="DmsD-type"/>
</dbReference>
<dbReference type="InterPro" id="IPR028611">
    <property type="entry name" value="DmsD_chaperone"/>
</dbReference>
<dbReference type="InterPro" id="IPR020945">
    <property type="entry name" value="DMSO/NO3_reduct_chaperone"/>
</dbReference>
<dbReference type="InterPro" id="IPR036411">
    <property type="entry name" value="TorD-like_sf"/>
</dbReference>
<dbReference type="InterPro" id="IPR050289">
    <property type="entry name" value="TorD/DmsD_chaperones"/>
</dbReference>
<dbReference type="NCBIfam" id="NF008632">
    <property type="entry name" value="PRK11621.1"/>
    <property type="match status" value="1"/>
</dbReference>
<dbReference type="PANTHER" id="PTHR34227">
    <property type="entry name" value="CHAPERONE PROTEIN YCDY"/>
    <property type="match status" value="1"/>
</dbReference>
<dbReference type="PANTHER" id="PTHR34227:SF13">
    <property type="entry name" value="TAT PROOFREADING CHAPERONE DMSD-RELATED"/>
    <property type="match status" value="1"/>
</dbReference>
<dbReference type="Pfam" id="PF02613">
    <property type="entry name" value="Nitrate_red_del"/>
    <property type="match status" value="1"/>
</dbReference>
<dbReference type="PIRSF" id="PIRSF004690">
    <property type="entry name" value="DmsD"/>
    <property type="match status" value="1"/>
</dbReference>
<dbReference type="SUPFAM" id="SSF89155">
    <property type="entry name" value="TorD-like"/>
    <property type="match status" value="1"/>
</dbReference>
<gene>
    <name evidence="1" type="primary">dmsD</name>
    <name type="ordered locus">HI_1044</name>
</gene>
<sequence length="203" mass="24082">MQNTLQQISIYGRLLGAVFYYEPNDARLTDILTFFRQPNWMQEWEISFDVKTHKKITALIEKGLQQNITEQYQYLFIGPNELPTPPWGSVYLDPECVIFGNSLLALRDFLQQHQIAFQTQQDEPEDHIGLMLMLAAYLAENRPHLLTKFLREHFLTWAYHFLEQLSKIENSDFYQALALLTIKTLQQWQVDLHINVPTVRFYR</sequence>